<organism>
    <name type="scientific">Wolinella succinogenes (strain ATCC 29543 / DSM 1740 / CCUG 13145 / JCM 31913 / LMG 7466 / NCTC 11488 / FDC 602W)</name>
    <name type="common">Vibrio succinogenes</name>
    <dbReference type="NCBI Taxonomy" id="273121"/>
    <lineage>
        <taxon>Bacteria</taxon>
        <taxon>Pseudomonadati</taxon>
        <taxon>Campylobacterota</taxon>
        <taxon>Epsilonproteobacteria</taxon>
        <taxon>Campylobacterales</taxon>
        <taxon>Helicobacteraceae</taxon>
        <taxon>Wolinella</taxon>
    </lineage>
</organism>
<dbReference type="EC" id="1.1.1.86" evidence="1"/>
<dbReference type="EMBL" id="BX571662">
    <property type="protein sequence ID" value="CAE10888.1"/>
    <property type="molecule type" value="Genomic_DNA"/>
</dbReference>
<dbReference type="RefSeq" id="WP_011139671.1">
    <property type="nucleotide sequence ID" value="NC_005090.1"/>
</dbReference>
<dbReference type="SMR" id="Q7M851"/>
<dbReference type="STRING" id="273121.WS1878"/>
<dbReference type="KEGG" id="wsu:WS1878"/>
<dbReference type="eggNOG" id="COG0059">
    <property type="taxonomic scope" value="Bacteria"/>
</dbReference>
<dbReference type="HOGENOM" id="CLU_033821_0_1_7"/>
<dbReference type="UniPathway" id="UPA00047">
    <property type="reaction ID" value="UER00056"/>
</dbReference>
<dbReference type="UniPathway" id="UPA00049">
    <property type="reaction ID" value="UER00060"/>
</dbReference>
<dbReference type="Proteomes" id="UP000000422">
    <property type="component" value="Chromosome"/>
</dbReference>
<dbReference type="GO" id="GO:0005829">
    <property type="term" value="C:cytosol"/>
    <property type="evidence" value="ECO:0007669"/>
    <property type="project" value="TreeGrafter"/>
</dbReference>
<dbReference type="GO" id="GO:0004455">
    <property type="term" value="F:ketol-acid reductoisomerase activity"/>
    <property type="evidence" value="ECO:0007669"/>
    <property type="project" value="UniProtKB-UniRule"/>
</dbReference>
<dbReference type="GO" id="GO:0000287">
    <property type="term" value="F:magnesium ion binding"/>
    <property type="evidence" value="ECO:0007669"/>
    <property type="project" value="UniProtKB-UniRule"/>
</dbReference>
<dbReference type="GO" id="GO:0050661">
    <property type="term" value="F:NADP binding"/>
    <property type="evidence" value="ECO:0007669"/>
    <property type="project" value="InterPro"/>
</dbReference>
<dbReference type="GO" id="GO:0009097">
    <property type="term" value="P:isoleucine biosynthetic process"/>
    <property type="evidence" value="ECO:0007669"/>
    <property type="project" value="UniProtKB-UniRule"/>
</dbReference>
<dbReference type="GO" id="GO:0009099">
    <property type="term" value="P:L-valine biosynthetic process"/>
    <property type="evidence" value="ECO:0007669"/>
    <property type="project" value="UniProtKB-UniRule"/>
</dbReference>
<dbReference type="FunFam" id="3.40.50.720:FF:000023">
    <property type="entry name" value="Ketol-acid reductoisomerase (NADP(+))"/>
    <property type="match status" value="1"/>
</dbReference>
<dbReference type="Gene3D" id="6.10.240.10">
    <property type="match status" value="1"/>
</dbReference>
<dbReference type="Gene3D" id="3.40.50.720">
    <property type="entry name" value="NAD(P)-binding Rossmann-like Domain"/>
    <property type="match status" value="1"/>
</dbReference>
<dbReference type="HAMAP" id="MF_00435">
    <property type="entry name" value="IlvC"/>
    <property type="match status" value="1"/>
</dbReference>
<dbReference type="InterPro" id="IPR008927">
    <property type="entry name" value="6-PGluconate_DH-like_C_sf"/>
</dbReference>
<dbReference type="InterPro" id="IPR013023">
    <property type="entry name" value="KARI"/>
</dbReference>
<dbReference type="InterPro" id="IPR000506">
    <property type="entry name" value="KARI_C"/>
</dbReference>
<dbReference type="InterPro" id="IPR013116">
    <property type="entry name" value="KARI_N"/>
</dbReference>
<dbReference type="InterPro" id="IPR014359">
    <property type="entry name" value="KARI_prok"/>
</dbReference>
<dbReference type="InterPro" id="IPR036291">
    <property type="entry name" value="NAD(P)-bd_dom_sf"/>
</dbReference>
<dbReference type="NCBIfam" id="TIGR00465">
    <property type="entry name" value="ilvC"/>
    <property type="match status" value="1"/>
</dbReference>
<dbReference type="NCBIfam" id="NF004017">
    <property type="entry name" value="PRK05479.1"/>
    <property type="match status" value="1"/>
</dbReference>
<dbReference type="NCBIfam" id="NF009940">
    <property type="entry name" value="PRK13403.1"/>
    <property type="match status" value="1"/>
</dbReference>
<dbReference type="PANTHER" id="PTHR21371">
    <property type="entry name" value="KETOL-ACID REDUCTOISOMERASE, MITOCHONDRIAL"/>
    <property type="match status" value="1"/>
</dbReference>
<dbReference type="PANTHER" id="PTHR21371:SF1">
    <property type="entry name" value="KETOL-ACID REDUCTOISOMERASE, MITOCHONDRIAL"/>
    <property type="match status" value="1"/>
</dbReference>
<dbReference type="Pfam" id="PF01450">
    <property type="entry name" value="KARI_C"/>
    <property type="match status" value="1"/>
</dbReference>
<dbReference type="Pfam" id="PF07991">
    <property type="entry name" value="KARI_N"/>
    <property type="match status" value="1"/>
</dbReference>
<dbReference type="PIRSF" id="PIRSF000116">
    <property type="entry name" value="IlvC_gammaproteo"/>
    <property type="match status" value="1"/>
</dbReference>
<dbReference type="SUPFAM" id="SSF48179">
    <property type="entry name" value="6-phosphogluconate dehydrogenase C-terminal domain-like"/>
    <property type="match status" value="1"/>
</dbReference>
<dbReference type="SUPFAM" id="SSF51735">
    <property type="entry name" value="NAD(P)-binding Rossmann-fold domains"/>
    <property type="match status" value="1"/>
</dbReference>
<dbReference type="PROSITE" id="PS51851">
    <property type="entry name" value="KARI_C"/>
    <property type="match status" value="1"/>
</dbReference>
<dbReference type="PROSITE" id="PS51850">
    <property type="entry name" value="KARI_N"/>
    <property type="match status" value="1"/>
</dbReference>
<accession>Q7M851</accession>
<comment type="function">
    <text evidence="1">Involved in the biosynthesis of branched-chain amino acids (BCAA). Catalyzes an alkyl-migration followed by a ketol-acid reduction of (S)-2-acetolactate (S2AL) to yield (R)-2,3-dihydroxy-isovalerate. In the isomerase reaction, S2AL is rearranged via a Mg-dependent methyl migration to produce 3-hydroxy-3-methyl-2-ketobutyrate (HMKB). In the reductase reaction, this 2-ketoacid undergoes a metal-dependent reduction by NADPH to yield (R)-2,3-dihydroxy-isovalerate.</text>
</comment>
<comment type="catalytic activity">
    <reaction evidence="1">
        <text>(2R)-2,3-dihydroxy-3-methylbutanoate + NADP(+) = (2S)-2-acetolactate + NADPH + H(+)</text>
        <dbReference type="Rhea" id="RHEA:22068"/>
        <dbReference type="ChEBI" id="CHEBI:15378"/>
        <dbReference type="ChEBI" id="CHEBI:49072"/>
        <dbReference type="ChEBI" id="CHEBI:57783"/>
        <dbReference type="ChEBI" id="CHEBI:58349"/>
        <dbReference type="ChEBI" id="CHEBI:58476"/>
        <dbReference type="EC" id="1.1.1.86"/>
    </reaction>
</comment>
<comment type="catalytic activity">
    <reaction evidence="1">
        <text>(2R,3R)-2,3-dihydroxy-3-methylpentanoate + NADP(+) = (S)-2-ethyl-2-hydroxy-3-oxobutanoate + NADPH + H(+)</text>
        <dbReference type="Rhea" id="RHEA:13493"/>
        <dbReference type="ChEBI" id="CHEBI:15378"/>
        <dbReference type="ChEBI" id="CHEBI:49256"/>
        <dbReference type="ChEBI" id="CHEBI:49258"/>
        <dbReference type="ChEBI" id="CHEBI:57783"/>
        <dbReference type="ChEBI" id="CHEBI:58349"/>
        <dbReference type="EC" id="1.1.1.86"/>
    </reaction>
</comment>
<comment type="cofactor">
    <cofactor evidence="1">
        <name>Mg(2+)</name>
        <dbReference type="ChEBI" id="CHEBI:18420"/>
    </cofactor>
    <text evidence="1">Binds 2 magnesium ions per subunit.</text>
</comment>
<comment type="pathway">
    <text evidence="1">Amino-acid biosynthesis; L-isoleucine biosynthesis; L-isoleucine from 2-oxobutanoate: step 2/4.</text>
</comment>
<comment type="pathway">
    <text evidence="1">Amino-acid biosynthesis; L-valine biosynthesis; L-valine from pyruvate: step 2/4.</text>
</comment>
<comment type="similarity">
    <text evidence="1">Belongs to the ketol-acid reductoisomerase family.</text>
</comment>
<feature type="chain" id="PRO_0000151382" description="Ketol-acid reductoisomerase (NADP(+))">
    <location>
        <begin position="1"/>
        <end position="340"/>
    </location>
</feature>
<feature type="domain" description="KARI N-terminal Rossmann" evidence="2">
    <location>
        <begin position="3"/>
        <end position="183"/>
    </location>
</feature>
<feature type="domain" description="KARI C-terminal knotted" evidence="3">
    <location>
        <begin position="184"/>
        <end position="329"/>
    </location>
</feature>
<feature type="active site" evidence="1">
    <location>
        <position position="109"/>
    </location>
</feature>
<feature type="binding site" evidence="1">
    <location>
        <begin position="26"/>
        <end position="29"/>
    </location>
    <ligand>
        <name>NADP(+)</name>
        <dbReference type="ChEBI" id="CHEBI:58349"/>
    </ligand>
</feature>
<feature type="binding site" evidence="1">
    <location>
        <position position="54"/>
    </location>
    <ligand>
        <name>NADP(+)</name>
        <dbReference type="ChEBI" id="CHEBI:58349"/>
    </ligand>
</feature>
<feature type="binding site" evidence="1">
    <location>
        <begin position="84"/>
        <end position="87"/>
    </location>
    <ligand>
        <name>NADP(+)</name>
        <dbReference type="ChEBI" id="CHEBI:58349"/>
    </ligand>
</feature>
<feature type="binding site" evidence="1">
    <location>
        <position position="135"/>
    </location>
    <ligand>
        <name>NADP(+)</name>
        <dbReference type="ChEBI" id="CHEBI:58349"/>
    </ligand>
</feature>
<feature type="binding site" evidence="1">
    <location>
        <position position="192"/>
    </location>
    <ligand>
        <name>Mg(2+)</name>
        <dbReference type="ChEBI" id="CHEBI:18420"/>
        <label>1</label>
    </ligand>
</feature>
<feature type="binding site" evidence="1">
    <location>
        <position position="192"/>
    </location>
    <ligand>
        <name>Mg(2+)</name>
        <dbReference type="ChEBI" id="CHEBI:18420"/>
        <label>2</label>
    </ligand>
</feature>
<feature type="binding site" evidence="1">
    <location>
        <position position="196"/>
    </location>
    <ligand>
        <name>Mg(2+)</name>
        <dbReference type="ChEBI" id="CHEBI:18420"/>
        <label>1</label>
    </ligand>
</feature>
<feature type="binding site" evidence="1">
    <location>
        <position position="228"/>
    </location>
    <ligand>
        <name>Mg(2+)</name>
        <dbReference type="ChEBI" id="CHEBI:18420"/>
        <label>2</label>
    </ligand>
</feature>
<feature type="binding site" evidence="1">
    <location>
        <position position="232"/>
    </location>
    <ligand>
        <name>Mg(2+)</name>
        <dbReference type="ChEBI" id="CHEBI:18420"/>
        <label>2</label>
    </ligand>
</feature>
<feature type="binding site" evidence="1">
    <location>
        <position position="253"/>
    </location>
    <ligand>
        <name>substrate</name>
    </ligand>
</feature>
<protein>
    <recommendedName>
        <fullName evidence="1">Ketol-acid reductoisomerase (NADP(+))</fullName>
        <shortName evidence="1">KARI</shortName>
        <ecNumber evidence="1">1.1.1.86</ecNumber>
    </recommendedName>
    <alternativeName>
        <fullName evidence="1">Acetohydroxy-acid isomeroreductase</fullName>
        <shortName evidence="1">AHIR</shortName>
    </alternativeName>
    <alternativeName>
        <fullName evidence="1">Alpha-keto-beta-hydroxylacyl reductoisomerase</fullName>
    </alternativeName>
    <alternativeName>
        <fullName evidence="1">Ketol-acid reductoisomerase type 1</fullName>
    </alternativeName>
    <alternativeName>
        <fullName evidence="1">Ketol-acid reductoisomerase type I</fullName>
    </alternativeName>
</protein>
<gene>
    <name evidence="1" type="primary">ilvC</name>
    <name type="ordered locus">WS1878</name>
</gene>
<sequence length="340" mass="37014">MALSVYYDKDCNLDLIRSKKVAVVGFGSQGHAHAENLRDSGVEVVIGLHKGGSSWSKAEAKNFKVMEVAEASRYADVIMILIPDELQAEVFERDILPNLSEGKAIAFGHGFNVHFGQIKAPKGVDVIMIAPKAPGHTVRSEFVKGGGIPDLIAVEQNASGIAKEICLSYASAIGGGRTGIIETTFKDETETDLFGEQAVLCGGVTALVKAGFETLVEAGYPEEMAYFECLHELKLIVDLIFQGGLSDMRYSVSNTAEYGDMVSGPRVVNETSKAAMKEILKDIQEGRFAKDFILERKAGYARMNAERKNLAAHPIEQTGERLRAMMPWIGANKIIDKNRN</sequence>
<reference key="1">
    <citation type="journal article" date="2003" name="Proc. Natl. Acad. Sci. U.S.A.">
        <title>Complete genome sequence and analysis of Wolinella succinogenes.</title>
        <authorList>
            <person name="Baar C."/>
            <person name="Eppinger M."/>
            <person name="Raddatz G."/>
            <person name="Simon J."/>
            <person name="Lanz C."/>
            <person name="Klimmek O."/>
            <person name="Nandakumar R."/>
            <person name="Gross R."/>
            <person name="Rosinus A."/>
            <person name="Keller H."/>
            <person name="Jagtap P."/>
            <person name="Linke B."/>
            <person name="Meyer F."/>
            <person name="Lederer H."/>
            <person name="Schuster S.C."/>
        </authorList>
    </citation>
    <scope>NUCLEOTIDE SEQUENCE [LARGE SCALE GENOMIC DNA]</scope>
    <source>
        <strain>ATCC 29543 / DSM 1740 / CCUG 13145 / JCM 31913 / LMG 7466 / NCTC 11488 / FDC 602W</strain>
    </source>
</reference>
<keyword id="KW-0028">Amino-acid biosynthesis</keyword>
<keyword id="KW-0100">Branched-chain amino acid biosynthesis</keyword>
<keyword id="KW-0460">Magnesium</keyword>
<keyword id="KW-0479">Metal-binding</keyword>
<keyword id="KW-0521">NADP</keyword>
<keyword id="KW-0560">Oxidoreductase</keyword>
<keyword id="KW-1185">Reference proteome</keyword>
<proteinExistence type="inferred from homology"/>
<name>ILVC_WOLSU</name>
<evidence type="ECO:0000255" key="1">
    <source>
        <dbReference type="HAMAP-Rule" id="MF_00435"/>
    </source>
</evidence>
<evidence type="ECO:0000255" key="2">
    <source>
        <dbReference type="PROSITE-ProRule" id="PRU01197"/>
    </source>
</evidence>
<evidence type="ECO:0000255" key="3">
    <source>
        <dbReference type="PROSITE-ProRule" id="PRU01198"/>
    </source>
</evidence>